<accession>P39952</accession>
<accession>D3DM61</accession>
<feature type="transit peptide" description="Mitochondrion" evidence="11">
    <location>
        <begin position="1"/>
        <end position="42"/>
    </location>
</feature>
<feature type="chain" id="PRO_0000020362" description="Mitochondrial inner membrane protein OXA1">
    <location>
        <begin position="43"/>
        <end position="402"/>
    </location>
</feature>
<feature type="topological domain" description="Mitochondrial intermembrane" evidence="11">
    <location>
        <begin position="43"/>
        <end position="118"/>
    </location>
</feature>
<feature type="transmembrane region" description="Helical" evidence="1">
    <location>
        <begin position="119"/>
        <end position="139"/>
    </location>
</feature>
<feature type="topological domain" description="Mitochondrial matrix" evidence="15">
    <location>
        <begin position="140"/>
        <end position="199"/>
    </location>
</feature>
<feature type="transmembrane region" description="Helical" evidence="1">
    <location>
        <begin position="200"/>
        <end position="220"/>
    </location>
</feature>
<feature type="topological domain" description="Mitochondrial intermembrane" evidence="15">
    <location>
        <begin position="221"/>
        <end position="239"/>
    </location>
</feature>
<feature type="transmembrane region" description="Helical" evidence="1">
    <location>
        <begin position="240"/>
        <end position="260"/>
    </location>
</feature>
<feature type="topological domain" description="Mitochondrial matrix" evidence="15">
    <location>
        <begin position="261"/>
        <end position="275"/>
    </location>
</feature>
<feature type="transmembrane region" description="Helical" evidence="1">
    <location>
        <begin position="276"/>
        <end position="292"/>
    </location>
</feature>
<feature type="topological domain" description="Mitochondrial intermembrane" evidence="15">
    <location>
        <begin position="293"/>
        <end position="297"/>
    </location>
</feature>
<feature type="transmembrane region" description="Helical" evidence="1">
    <location>
        <begin position="298"/>
        <end position="316"/>
    </location>
</feature>
<feature type="topological domain" description="Mitochondrial matrix" evidence="15">
    <location>
        <begin position="317"/>
        <end position="402"/>
    </location>
</feature>
<feature type="region of interest" description="Disordered" evidence="2">
    <location>
        <begin position="366"/>
        <end position="386"/>
    </location>
</feature>
<feature type="compositionally biased region" description="Basic and acidic residues" evidence="2">
    <location>
        <begin position="366"/>
        <end position="385"/>
    </location>
</feature>
<feature type="mutagenesis site" description="Leads to respiratory deficiency." evidence="5">
    <original>W</original>
    <variation>R</variation>
    <location>
        <position position="128"/>
    </location>
</feature>
<feature type="mutagenesis site" description="Leads to a defect in complex V assembly and subsequent respiratory deficiency." evidence="5">
    <original>W</original>
    <variation>R</variation>
    <location>
        <position position="129"/>
    </location>
</feature>
<feature type="mutagenesis site" description="Leads to a defect in complex V assembly and subsequent respiratory deficiency." evidence="5">
    <original>G</original>
    <variation>R</variation>
    <location>
        <position position="213"/>
    </location>
</feature>
<feature type="mutagenesis site" description="Leads to a defect in complexes IV and V assembly, and subsequent respiratory deficiency." evidence="5">
    <original>F</original>
    <variation>S</variation>
    <location>
        <position position="229"/>
    </location>
</feature>
<feature type="mutagenesis site" description="Leads to a defect in complex IV assembly and subsequent respiratory deficiency." evidence="5">
    <original>L</original>
    <variation>S</variation>
    <location>
        <position position="240"/>
    </location>
</feature>
<feature type="mutagenesis site" description="Leads to respiratory deficiency." evidence="5">
    <original>L</original>
    <variation>S</variation>
    <location>
        <position position="249"/>
    </location>
</feature>
<feature type="mutagenesis site" description="Leads to respiratory deficiency." evidence="5">
    <original>Q</original>
    <variation>R</variation>
    <location>
        <position position="250"/>
    </location>
</feature>
<feature type="mutagenesis site" description="Leads to a defect in complex V assembly and subsequent respiratory deficiency." evidence="5">
    <original>L</original>
    <variation>P</variation>
    <location>
        <position position="300"/>
    </location>
</feature>
<feature type="mutagenesis site" description="Leads to respiratory deficiency." evidence="5">
    <original>Y</original>
    <variation>D</variation>
    <location>
        <position position="301"/>
    </location>
</feature>
<feature type="sequence conflict" description="In Ref. 1; CAA54675." evidence="15" ref="1">
    <original>W</original>
    <variation>R</variation>
    <location>
        <position position="108"/>
    </location>
</feature>
<keyword id="KW-0472">Membrane</keyword>
<keyword id="KW-0496">Mitochondrion</keyword>
<keyword id="KW-0999">Mitochondrion inner membrane</keyword>
<keyword id="KW-1185">Reference proteome</keyword>
<keyword id="KW-0809">Transit peptide</keyword>
<keyword id="KW-0812">Transmembrane</keyword>
<keyword id="KW-1133">Transmembrane helix</keyword>
<protein>
    <recommendedName>
        <fullName evidence="15">Mitochondrial inner membrane protein OXA1</fullName>
    </recommendedName>
    <alternativeName>
        <fullName evidence="15">Cytochrome oxidase biogenesis protein OXA1</fullName>
    </alternativeName>
    <alternativeName>
        <fullName evidence="14">Oxidase assembly protein 1</fullName>
    </alternativeName>
</protein>
<sequence length="402" mass="44816">MFKLTSRLVTSRFAASSRLATARTIVLPRPHPSWISFQAKRFNSTGPNANDVSEIQTQLPSIDELTSSAPSLSASTSDLIANTTQTVGELSSHIGYLNSIGLAQTWYWPSDIIQHVLEAVHVYSGLPWWGTIAATTILIRCLMFPLYVKSSDTVARNSHIKPELDALNNKLMSTTDLQQGQLVAMQRKKLLSSHGIKNRWLAAPMLQIPIALGFFNALRHMANYPVDGFANQGVAWFTDLTQADPYLGLQVITAAVFISFTRLGGETGAQQFSSPMKRLFTILPIISIPATMNLSSAVVLYFAFNGAFSVLQTMILRNKWVRSKLKITEVAKPRTPIAGASPTENMGIFQSLKHNIQKARDQAERRQLMQDNEKKLQESFKEKRQNSKIKIVHKSNFINNKK</sequence>
<comment type="function">
    <text evidence="5 7 8 9 12">Mitochondrial inner membrane insertase that mediates the insertion of both mitochondrion-encoded precursors and nuclear-encoded proteins from the matrix into the inner membrane. Links mitoribosomes with the inner membrane (PubMed:22904327). Forms pores capable of accommodating translocating protein segments (PubMed:22829595). Essential for the activity and assembly of cytochrome c oxidase (PubMed:22904327). Plays a central role in the translocation and export of the N-terminal part of the COX2 protein into the mitochondrial intermembrane space.</text>
</comment>
<comment type="subunit">
    <text evidence="4 9 10">Interacts with the large ribosome subunit of mitochondrial ribosome (PubMed:14657017, PubMed:22904327). Interacts directly with MRP20 (PubMed:14657017). Interacts with OXA1 (PubMed:25609543).</text>
</comment>
<comment type="subcellular location">
    <subcellularLocation>
        <location evidence="6 11">Mitochondrion inner membrane</location>
        <topology evidence="11">Multi-pass membrane protein</topology>
    </subcellularLocation>
    <text evidence="6">The availability of nuclear- and mitochondrial-encoded substrates influences the inner- membrane distribution.</text>
</comment>
<comment type="disruption phenotype">
    <text evidence="8">Leads to reduced steady-state levels and activities of the mitochondrial ATP/ADP carrier protein AAC2.</text>
</comment>
<comment type="miscellaneous">
    <text evidence="3">Present with 6550 molecules/cell in log phase SD medium.</text>
</comment>
<comment type="similarity">
    <text evidence="15">Belongs to the OXA1/ALB3/YidC family.</text>
</comment>
<proteinExistence type="evidence at protein level"/>
<organism>
    <name type="scientific">Saccharomyces cerevisiae (strain ATCC 204508 / S288c)</name>
    <name type="common">Baker's yeast</name>
    <dbReference type="NCBI Taxonomy" id="559292"/>
    <lineage>
        <taxon>Eukaryota</taxon>
        <taxon>Fungi</taxon>
        <taxon>Dikarya</taxon>
        <taxon>Ascomycota</taxon>
        <taxon>Saccharomycotina</taxon>
        <taxon>Saccharomycetes</taxon>
        <taxon>Saccharomycetales</taxon>
        <taxon>Saccharomycetaceae</taxon>
        <taxon>Saccharomyces</taxon>
    </lineage>
</organism>
<dbReference type="EMBL" id="X77558">
    <property type="protein sequence ID" value="CAA54675.1"/>
    <property type="molecule type" value="Genomic_DNA"/>
</dbReference>
<dbReference type="EMBL" id="X74456">
    <property type="protein sequence ID" value="CAA52465.1"/>
    <property type="molecule type" value="Genomic_DNA"/>
</dbReference>
<dbReference type="EMBL" id="U18917">
    <property type="protein sequence ID" value="AAB64681.1"/>
    <property type="molecule type" value="Genomic_DNA"/>
</dbReference>
<dbReference type="EMBL" id="AY693132">
    <property type="protein sequence ID" value="AAT93151.1"/>
    <property type="molecule type" value="Genomic_DNA"/>
</dbReference>
<dbReference type="EMBL" id="BK006939">
    <property type="protein sequence ID" value="DAA07815.1"/>
    <property type="molecule type" value="Genomic_DNA"/>
</dbReference>
<dbReference type="PIR" id="S47329">
    <property type="entry name" value="S47329"/>
</dbReference>
<dbReference type="RefSeq" id="NP_011081.1">
    <property type="nucleotide sequence ID" value="NM_001179044.1"/>
</dbReference>
<dbReference type="SMR" id="P39952"/>
<dbReference type="BioGRID" id="36904">
    <property type="interactions" value="165"/>
</dbReference>
<dbReference type="DIP" id="DIP-3870N"/>
<dbReference type="FunCoup" id="P39952">
    <property type="interactions" value="756"/>
</dbReference>
<dbReference type="IntAct" id="P39952">
    <property type="interactions" value="19"/>
</dbReference>
<dbReference type="MINT" id="P39952"/>
<dbReference type="STRING" id="4932.YER154W"/>
<dbReference type="TCDB" id="2.A.9.1.1">
    <property type="family name" value="the membrane protein insertase (yidc/alb3/oxa1) family"/>
</dbReference>
<dbReference type="PaxDb" id="4932-YER154W"/>
<dbReference type="PeptideAtlas" id="P39952"/>
<dbReference type="EnsemblFungi" id="YER154W_mRNA">
    <property type="protein sequence ID" value="YER154W"/>
    <property type="gene ID" value="YER154W"/>
</dbReference>
<dbReference type="GeneID" id="856898"/>
<dbReference type="KEGG" id="sce:YER154W"/>
<dbReference type="AGR" id="SGD:S000000956"/>
<dbReference type="SGD" id="S000000956">
    <property type="gene designation" value="OXA1"/>
</dbReference>
<dbReference type="VEuPathDB" id="FungiDB:YER154W"/>
<dbReference type="eggNOG" id="KOG1239">
    <property type="taxonomic scope" value="Eukaryota"/>
</dbReference>
<dbReference type="GeneTree" id="ENSGT00530000063506"/>
<dbReference type="HOGENOM" id="CLU_029282_3_0_1"/>
<dbReference type="InParanoid" id="P39952"/>
<dbReference type="OMA" id="GWKNAQT"/>
<dbReference type="OrthoDB" id="2148490at2759"/>
<dbReference type="BioCyc" id="YEAST:G3O-30315-MONOMER"/>
<dbReference type="BioGRID-ORCS" id="856898">
    <property type="hits" value="8 hits in 10 CRISPR screens"/>
</dbReference>
<dbReference type="PRO" id="PR:P39952"/>
<dbReference type="Proteomes" id="UP000002311">
    <property type="component" value="Chromosome V"/>
</dbReference>
<dbReference type="RNAct" id="P39952">
    <property type="molecule type" value="protein"/>
</dbReference>
<dbReference type="GO" id="GO:0030061">
    <property type="term" value="C:mitochondrial crista"/>
    <property type="evidence" value="ECO:0000314"/>
    <property type="project" value="SGD"/>
</dbReference>
<dbReference type="GO" id="GO:0097002">
    <property type="term" value="C:mitochondrial inner boundary membrane"/>
    <property type="evidence" value="ECO:0000314"/>
    <property type="project" value="SGD"/>
</dbReference>
<dbReference type="GO" id="GO:0005743">
    <property type="term" value="C:mitochondrial inner membrane"/>
    <property type="evidence" value="ECO:0000318"/>
    <property type="project" value="GO_Central"/>
</dbReference>
<dbReference type="GO" id="GO:0005739">
    <property type="term" value="C:mitochondrion"/>
    <property type="evidence" value="ECO:0007005"/>
    <property type="project" value="SGD"/>
</dbReference>
<dbReference type="GO" id="GO:0032977">
    <property type="term" value="F:membrane insertase activity"/>
    <property type="evidence" value="ECO:0000315"/>
    <property type="project" value="SGD"/>
</dbReference>
<dbReference type="GO" id="GO:0097177">
    <property type="term" value="F:mitochondrial ribosome binding"/>
    <property type="evidence" value="ECO:0000314"/>
    <property type="project" value="SGD"/>
</dbReference>
<dbReference type="GO" id="GO:0033615">
    <property type="term" value="P:mitochondrial proton-transporting ATP synthase complex assembly"/>
    <property type="evidence" value="ECO:0000315"/>
    <property type="project" value="SGD"/>
</dbReference>
<dbReference type="GO" id="GO:0045039">
    <property type="term" value="P:protein insertion into mitochondrial inner membrane"/>
    <property type="evidence" value="ECO:0000315"/>
    <property type="project" value="SGD"/>
</dbReference>
<dbReference type="GO" id="GO:0032979">
    <property type="term" value="P:protein insertion into mitochondrial inner membrane from matrix"/>
    <property type="evidence" value="ECO:0000315"/>
    <property type="project" value="SGD"/>
</dbReference>
<dbReference type="CDD" id="cd20069">
    <property type="entry name" value="5TM_Oxa1-like"/>
    <property type="match status" value="1"/>
</dbReference>
<dbReference type="InterPro" id="IPR001708">
    <property type="entry name" value="YidC/ALB3/OXA1/COX18"/>
</dbReference>
<dbReference type="InterPro" id="IPR028055">
    <property type="entry name" value="YidC/Oxa/ALB_C"/>
</dbReference>
<dbReference type="PANTHER" id="PTHR12428:SF66">
    <property type="entry name" value="MITOCHONDRIAL INNER MEMBRANE PROTEIN OXA1L"/>
    <property type="match status" value="1"/>
</dbReference>
<dbReference type="PANTHER" id="PTHR12428">
    <property type="entry name" value="OXA1"/>
    <property type="match status" value="1"/>
</dbReference>
<dbReference type="Pfam" id="PF02096">
    <property type="entry name" value="60KD_IMP"/>
    <property type="match status" value="1"/>
</dbReference>
<gene>
    <name evidence="14" type="primary">OXA1</name>
    <name evidence="13" type="synonym">PET1402</name>
    <name evidence="16" type="ordered locus">YER154W</name>
</gene>
<evidence type="ECO:0000255" key="1"/>
<evidence type="ECO:0000256" key="2">
    <source>
        <dbReference type="SAM" id="MobiDB-lite"/>
    </source>
</evidence>
<evidence type="ECO:0000269" key="3">
    <source>
    </source>
</evidence>
<evidence type="ECO:0000269" key="4">
    <source>
    </source>
</evidence>
<evidence type="ECO:0000269" key="5">
    <source>
    </source>
</evidence>
<evidence type="ECO:0000269" key="6">
    <source>
    </source>
</evidence>
<evidence type="ECO:0000269" key="7">
    <source>
    </source>
</evidence>
<evidence type="ECO:0000269" key="8">
    <source>
    </source>
</evidence>
<evidence type="ECO:0000269" key="9">
    <source>
    </source>
</evidence>
<evidence type="ECO:0000269" key="10">
    <source>
    </source>
</evidence>
<evidence type="ECO:0000269" key="11">
    <source>
    </source>
</evidence>
<evidence type="ECO:0000269" key="12">
    <source>
    </source>
</evidence>
<evidence type="ECO:0000303" key="13">
    <source>
    </source>
</evidence>
<evidence type="ECO:0000303" key="14">
    <source>
    </source>
</evidence>
<evidence type="ECO:0000305" key="15"/>
<evidence type="ECO:0000312" key="16">
    <source>
        <dbReference type="SGD" id="S000000956"/>
    </source>
</evidence>
<reference key="1">
    <citation type="journal article" date="1994" name="J. Mol. Biol.">
        <title>OXA1, a Saccharomyces cerevisiae nuclear gene whose sequence is conserved from prokaryotes to eukaryotes controls cytochrome oxidase biogenesis.</title>
        <authorList>
            <person name="Bonnefoy N."/>
            <person name="Chalvet F."/>
            <person name="Hamel P."/>
            <person name="Slonimski P.P."/>
            <person name="Dujardin G."/>
        </authorList>
    </citation>
    <scope>NUCLEOTIDE SEQUENCE [GENOMIC DNA]</scope>
    <source>
        <strain>ATCC 28383 / FL100 / VTT C-80102</strain>
    </source>
</reference>
<reference key="2">
    <citation type="journal article" date="1994" name="Mol. Gen. Genet.">
        <title>PET1402, a nuclear gene required for proteolytic processing of cytochrome oxidase subunit 2 in yeast.</title>
        <authorList>
            <person name="Bauer M."/>
            <person name="Behrens M."/>
            <person name="Esser K."/>
            <person name="Michaelis G."/>
            <person name="Pratje E."/>
        </authorList>
    </citation>
    <scope>NUCLEOTIDE SEQUENCE [GENOMIC DNA]</scope>
</reference>
<reference key="3">
    <citation type="journal article" date="1997" name="Nature">
        <title>The nucleotide sequence of Saccharomyces cerevisiae chromosome V.</title>
        <authorList>
            <person name="Dietrich F.S."/>
            <person name="Mulligan J.T."/>
            <person name="Hennessy K.M."/>
            <person name="Yelton M.A."/>
            <person name="Allen E."/>
            <person name="Araujo R."/>
            <person name="Aviles E."/>
            <person name="Berno A."/>
            <person name="Brennan T."/>
            <person name="Carpenter J."/>
            <person name="Chen E."/>
            <person name="Cherry J.M."/>
            <person name="Chung E."/>
            <person name="Duncan M."/>
            <person name="Guzman E."/>
            <person name="Hartzell G."/>
            <person name="Hunicke-Smith S."/>
            <person name="Hyman R.W."/>
            <person name="Kayser A."/>
            <person name="Komp C."/>
            <person name="Lashkari D."/>
            <person name="Lew H."/>
            <person name="Lin D."/>
            <person name="Mosedale D."/>
            <person name="Nakahara K."/>
            <person name="Namath A."/>
            <person name="Norgren R."/>
            <person name="Oefner P."/>
            <person name="Oh C."/>
            <person name="Petel F.X."/>
            <person name="Roberts D."/>
            <person name="Sehl P."/>
            <person name="Schramm S."/>
            <person name="Shogren T."/>
            <person name="Smith V."/>
            <person name="Taylor P."/>
            <person name="Wei Y."/>
            <person name="Botstein D."/>
            <person name="Davis R.W."/>
        </authorList>
    </citation>
    <scope>NUCLEOTIDE SEQUENCE [LARGE SCALE GENOMIC DNA]</scope>
    <source>
        <strain>ATCC 204508 / S288c</strain>
    </source>
</reference>
<reference key="4">
    <citation type="journal article" date="2014" name="G3 (Bethesda)">
        <title>The reference genome sequence of Saccharomyces cerevisiae: Then and now.</title>
        <authorList>
            <person name="Engel S.R."/>
            <person name="Dietrich F.S."/>
            <person name="Fisk D.G."/>
            <person name="Binkley G."/>
            <person name="Balakrishnan R."/>
            <person name="Costanzo M.C."/>
            <person name="Dwight S.S."/>
            <person name="Hitz B.C."/>
            <person name="Karra K."/>
            <person name="Nash R.S."/>
            <person name="Weng S."/>
            <person name="Wong E.D."/>
            <person name="Lloyd P."/>
            <person name="Skrzypek M.S."/>
            <person name="Miyasato S.R."/>
            <person name="Simison M."/>
            <person name="Cherry J.M."/>
        </authorList>
    </citation>
    <scope>GENOME REANNOTATION</scope>
    <source>
        <strain>ATCC 204508 / S288c</strain>
    </source>
</reference>
<reference key="5">
    <citation type="journal article" date="2007" name="Genome Res.">
        <title>Approaching a complete repository of sequence-verified protein-encoding clones for Saccharomyces cerevisiae.</title>
        <authorList>
            <person name="Hu Y."/>
            <person name="Rolfs A."/>
            <person name="Bhullar B."/>
            <person name="Murthy T.V.S."/>
            <person name="Zhu C."/>
            <person name="Berger M.F."/>
            <person name="Camargo A.A."/>
            <person name="Kelley F."/>
            <person name="McCarron S."/>
            <person name="Jepson D."/>
            <person name="Richardson A."/>
            <person name="Raphael J."/>
            <person name="Moreira D."/>
            <person name="Taycher E."/>
            <person name="Zuo D."/>
            <person name="Mohr S."/>
            <person name="Kane M.F."/>
            <person name="Williamson J."/>
            <person name="Simpson A.J.G."/>
            <person name="Bulyk M.L."/>
            <person name="Harlow E."/>
            <person name="Marsischky G."/>
            <person name="Kolodner R.D."/>
            <person name="LaBaer J."/>
        </authorList>
    </citation>
    <scope>NUCLEOTIDE SEQUENCE [GENOMIC DNA]</scope>
    <source>
        <strain>ATCC 204508 / S288c</strain>
    </source>
</reference>
<reference key="6">
    <citation type="journal article" date="1997" name="EMBO J.">
        <title>Insertion into the mitochondrial inner membrane of a polytopic protein, the nuclear-encoded Oxa1p.</title>
        <authorList>
            <person name="Herrmann J.M."/>
            <person name="Neupert W."/>
            <person name="Stuart R.A."/>
        </authorList>
    </citation>
    <scope>SUBCELLULAR LOCATION</scope>
    <scope>TRANSIT PEPTIDE</scope>
    <scope>TOPOLOGY</scope>
</reference>
<reference key="7">
    <citation type="journal article" date="1998" name="Proc. Natl. Acad. Sci. U.S.A.">
        <title>Oxa1p, an essential component of the N-tail protein export machinery in mitochondria.</title>
        <authorList>
            <person name="Hell K."/>
            <person name="Herrmann J.M."/>
            <person name="Pratje E."/>
            <person name="Neupert W."/>
            <person name="Stuart R.A."/>
        </authorList>
    </citation>
    <scope>FUNCTION</scope>
</reference>
<reference key="8">
    <citation type="journal article" date="2003" name="EMBO J.">
        <title>Yeast Oxa1 interacts with mitochondrial ribosomes: the importance of the C-terminal region of Oxa1.</title>
        <authorList>
            <person name="Jia L."/>
            <person name="Dienhart M."/>
            <person name="Schramp M."/>
            <person name="McCauley M."/>
            <person name="Hell K."/>
            <person name="Stuart R.A."/>
        </authorList>
    </citation>
    <scope>INTERACTION WITH MRP20</scope>
</reference>
<reference key="9">
    <citation type="journal article" date="2003" name="Nature">
        <title>Global analysis of protein expression in yeast.</title>
        <authorList>
            <person name="Ghaemmaghami S."/>
            <person name="Huh W.-K."/>
            <person name="Bower K."/>
            <person name="Howson R.W."/>
            <person name="Belle A."/>
            <person name="Dephoure N."/>
            <person name="O'Shea E.K."/>
            <person name="Weissman J.S."/>
        </authorList>
    </citation>
    <scope>LEVEL OF PROTEIN EXPRESSION [LARGE SCALE ANALYSIS]</scope>
</reference>
<reference key="10">
    <citation type="journal article" date="2002" name="Biochim. Biophys. Acta">
        <title>Insertion of proteins into the inner membrane of mitochondria: the role of the Oxa1 complex.</title>
        <authorList>
            <person name="Stuart R.A."/>
        </authorList>
    </citation>
    <scope>REVIEW</scope>
</reference>
<reference key="11">
    <citation type="journal article" date="2010" name="Mol. Microbiol.">
        <title>A mutational analysis reveals new functional interactions between domains of the Oxa1 protein in Saccharomyces cerevisiae.</title>
        <authorList>
            <person name="Mathieu L."/>
            <person name="Bourens M."/>
            <person name="Marsy S."/>
            <person name="Hlavacek O."/>
            <person name="Panozzo C."/>
            <person name="Dujardin G."/>
        </authorList>
    </citation>
    <scope>FUNCTION</scope>
    <scope>MUTAGENESIS OF TRP-128; TRP-129; GLY-213; PHE-229; LEU-240; LEU-249; GLN-250; LEU-300 AND TYR-301</scope>
</reference>
<reference key="12">
    <citation type="journal article" date="2012" name="J. Biol. Chem.">
        <title>The mitochondrial oxidase assembly protein1 (Oxa1) insertase forms a membrane pore in lipid bilayers.</title>
        <authorList>
            <person name="Kruger V."/>
            <person name="Deckers M."/>
            <person name="Hildenbeutel M."/>
            <person name="van der Laan M."/>
            <person name="Hellmers M."/>
            <person name="Dreker C."/>
            <person name="Preuss M."/>
            <person name="Herrmann J.M."/>
            <person name="Rehling P."/>
            <person name="Wagner R."/>
            <person name="Meinecke M."/>
        </authorList>
    </citation>
    <scope>FUNCTION</scope>
</reference>
<reference key="13">
    <citation type="journal article" date="2012" name="J. Biol. Chem.">
        <title>Oxa1-ribosome complexes coordinate the assembly of cytochrome C oxidase in mitochondria.</title>
        <authorList>
            <person name="Keil M."/>
            <person name="Bareth B."/>
            <person name="Woellhaf M.W."/>
            <person name="Peleh V."/>
            <person name="Prestele M."/>
            <person name="Rehling P."/>
            <person name="Herrmann J.M."/>
        </authorList>
    </citation>
    <scope>FUNCTION</scope>
    <scope>BINDING TO MITORIBOSOMES</scope>
</reference>
<reference key="14">
    <citation type="journal article" date="2012" name="J. Mol. Biol.">
        <title>The membrane insertase Oxa1 is required for efficient import of carrier proteins into mitochondria.</title>
        <authorList>
            <person name="Hildenbeutel M."/>
            <person name="Theis M."/>
            <person name="Geier M."/>
            <person name="Haferkamp I."/>
            <person name="Neuhaus H.E."/>
            <person name="Herrmann J.M."/>
            <person name="Ott M."/>
        </authorList>
    </citation>
    <scope>DISRUPTION PHENOTYPE</scope>
    <scope>FUNCTION</scope>
</reference>
<reference key="15">
    <citation type="journal article" date="2012" name="Mol. Biol. Cell">
        <title>The inner-mitochondrial distribution of Oxa1 depends on the growth conditions and on the availability of substrates.</title>
        <authorList>
            <person name="Stoldt S."/>
            <person name="Wenzel D."/>
            <person name="Hildenbeutel M."/>
            <person name="Wurm C.A."/>
            <person name="Herrmann J.M."/>
            <person name="Jakobs S."/>
        </authorList>
    </citation>
    <scope>SUBCELLULAR LOCATION</scope>
</reference>
<reference key="16">
    <citation type="journal article" date="2015" name="Nat. Commun.">
        <title>Organization of the mitochondrial translation machinery studied in situ by cryoelectron tomography.</title>
        <authorList>
            <person name="Pfeffer S."/>
            <person name="Woellhaf M.W."/>
            <person name="Herrmann J.M."/>
            <person name="Forster F."/>
        </authorList>
    </citation>
    <scope>INTERACTION WITH MBA1</scope>
</reference>
<name>OXA1_YEAST</name>